<proteinExistence type="inferred from homology"/>
<accession>B8G4U9</accession>
<feature type="chain" id="PRO_1000165798" description="DNA-directed RNA polymerase subunit beta">
    <location>
        <begin position="1"/>
        <end position="1227"/>
    </location>
</feature>
<name>RPOB_CHLAD</name>
<gene>
    <name evidence="1" type="primary">rpoB</name>
    <name type="ordered locus">Cagg_2707</name>
</gene>
<dbReference type="EC" id="2.7.7.6" evidence="1"/>
<dbReference type="EMBL" id="CP001337">
    <property type="protein sequence ID" value="ACL25575.1"/>
    <property type="molecule type" value="Genomic_DNA"/>
</dbReference>
<dbReference type="RefSeq" id="WP_015941432.1">
    <property type="nucleotide sequence ID" value="NC_011831.1"/>
</dbReference>
<dbReference type="SMR" id="B8G4U9"/>
<dbReference type="STRING" id="326427.Cagg_2707"/>
<dbReference type="KEGG" id="cag:Cagg_2707"/>
<dbReference type="eggNOG" id="COG0085">
    <property type="taxonomic scope" value="Bacteria"/>
</dbReference>
<dbReference type="HOGENOM" id="CLU_000524_4_0_0"/>
<dbReference type="OrthoDB" id="9803954at2"/>
<dbReference type="Proteomes" id="UP000002508">
    <property type="component" value="Chromosome"/>
</dbReference>
<dbReference type="GO" id="GO:0000428">
    <property type="term" value="C:DNA-directed RNA polymerase complex"/>
    <property type="evidence" value="ECO:0007669"/>
    <property type="project" value="UniProtKB-KW"/>
</dbReference>
<dbReference type="GO" id="GO:0003677">
    <property type="term" value="F:DNA binding"/>
    <property type="evidence" value="ECO:0007669"/>
    <property type="project" value="UniProtKB-UniRule"/>
</dbReference>
<dbReference type="GO" id="GO:0003899">
    <property type="term" value="F:DNA-directed RNA polymerase activity"/>
    <property type="evidence" value="ECO:0007669"/>
    <property type="project" value="UniProtKB-UniRule"/>
</dbReference>
<dbReference type="GO" id="GO:0032549">
    <property type="term" value="F:ribonucleoside binding"/>
    <property type="evidence" value="ECO:0007669"/>
    <property type="project" value="InterPro"/>
</dbReference>
<dbReference type="GO" id="GO:0006351">
    <property type="term" value="P:DNA-templated transcription"/>
    <property type="evidence" value="ECO:0007669"/>
    <property type="project" value="UniProtKB-UniRule"/>
</dbReference>
<dbReference type="CDD" id="cd12797">
    <property type="entry name" value="M23_peptidase"/>
    <property type="match status" value="1"/>
</dbReference>
<dbReference type="CDD" id="cd00653">
    <property type="entry name" value="RNA_pol_B_RPB2"/>
    <property type="match status" value="1"/>
</dbReference>
<dbReference type="FunFam" id="3.90.1800.10:FF:000001">
    <property type="entry name" value="DNA-directed RNA polymerase subunit beta"/>
    <property type="match status" value="1"/>
</dbReference>
<dbReference type="Gene3D" id="2.40.50.100">
    <property type="match status" value="1"/>
</dbReference>
<dbReference type="Gene3D" id="2.40.50.150">
    <property type="match status" value="1"/>
</dbReference>
<dbReference type="Gene3D" id="3.90.1100.10">
    <property type="match status" value="2"/>
</dbReference>
<dbReference type="Gene3D" id="2.40.270.10">
    <property type="entry name" value="DNA-directed RNA polymerase, subunit 2, domain 6"/>
    <property type="match status" value="1"/>
</dbReference>
<dbReference type="Gene3D" id="3.90.1800.10">
    <property type="entry name" value="RNA polymerase alpha subunit dimerisation domain"/>
    <property type="match status" value="1"/>
</dbReference>
<dbReference type="Gene3D" id="3.90.1110.10">
    <property type="entry name" value="RNA polymerase Rpb2, domain 2"/>
    <property type="match status" value="1"/>
</dbReference>
<dbReference type="HAMAP" id="MF_01321">
    <property type="entry name" value="RNApol_bact_RpoB"/>
    <property type="match status" value="1"/>
</dbReference>
<dbReference type="InterPro" id="IPR019462">
    <property type="entry name" value="DNA-dir_RNA_pol_bsu_external_1"/>
</dbReference>
<dbReference type="InterPro" id="IPR015712">
    <property type="entry name" value="DNA-dir_RNA_pol_su2"/>
</dbReference>
<dbReference type="InterPro" id="IPR007120">
    <property type="entry name" value="DNA-dir_RNAP_su2_dom"/>
</dbReference>
<dbReference type="InterPro" id="IPR037033">
    <property type="entry name" value="DNA-dir_RNAP_su2_hyb_sf"/>
</dbReference>
<dbReference type="InterPro" id="IPR010243">
    <property type="entry name" value="RNA_pol_bsu_bac"/>
</dbReference>
<dbReference type="InterPro" id="IPR007121">
    <property type="entry name" value="RNA_pol_bsu_CS"/>
</dbReference>
<dbReference type="InterPro" id="IPR007644">
    <property type="entry name" value="RNA_pol_bsu_protrusion"/>
</dbReference>
<dbReference type="InterPro" id="IPR007642">
    <property type="entry name" value="RNA_pol_Rpb2_2"/>
</dbReference>
<dbReference type="InterPro" id="IPR037034">
    <property type="entry name" value="RNA_pol_Rpb2_2_sf"/>
</dbReference>
<dbReference type="InterPro" id="IPR007645">
    <property type="entry name" value="RNA_pol_Rpb2_3"/>
</dbReference>
<dbReference type="InterPro" id="IPR007641">
    <property type="entry name" value="RNA_pol_Rpb2_7"/>
</dbReference>
<dbReference type="InterPro" id="IPR014724">
    <property type="entry name" value="RNA_pol_RPB2_OB-fold"/>
</dbReference>
<dbReference type="NCBIfam" id="NF001616">
    <property type="entry name" value="PRK00405.1"/>
    <property type="match status" value="1"/>
</dbReference>
<dbReference type="PANTHER" id="PTHR20856">
    <property type="entry name" value="DNA-DIRECTED RNA POLYMERASE I SUBUNIT 2"/>
    <property type="match status" value="1"/>
</dbReference>
<dbReference type="Pfam" id="PF04563">
    <property type="entry name" value="RNA_pol_Rpb2_1"/>
    <property type="match status" value="1"/>
</dbReference>
<dbReference type="Pfam" id="PF04561">
    <property type="entry name" value="RNA_pol_Rpb2_2"/>
    <property type="match status" value="2"/>
</dbReference>
<dbReference type="Pfam" id="PF04565">
    <property type="entry name" value="RNA_pol_Rpb2_3"/>
    <property type="match status" value="1"/>
</dbReference>
<dbReference type="Pfam" id="PF10385">
    <property type="entry name" value="RNA_pol_Rpb2_45"/>
    <property type="match status" value="1"/>
</dbReference>
<dbReference type="Pfam" id="PF00562">
    <property type="entry name" value="RNA_pol_Rpb2_6"/>
    <property type="match status" value="1"/>
</dbReference>
<dbReference type="Pfam" id="PF04560">
    <property type="entry name" value="RNA_pol_Rpb2_7"/>
    <property type="match status" value="1"/>
</dbReference>
<dbReference type="SUPFAM" id="SSF64484">
    <property type="entry name" value="beta and beta-prime subunits of DNA dependent RNA-polymerase"/>
    <property type="match status" value="1"/>
</dbReference>
<dbReference type="PROSITE" id="PS01166">
    <property type="entry name" value="RNA_POL_BETA"/>
    <property type="match status" value="1"/>
</dbReference>
<evidence type="ECO:0000255" key="1">
    <source>
        <dbReference type="HAMAP-Rule" id="MF_01321"/>
    </source>
</evidence>
<protein>
    <recommendedName>
        <fullName evidence="1">DNA-directed RNA polymerase subunit beta</fullName>
        <shortName evidence="1">RNAP subunit beta</shortName>
        <ecNumber evidence="1">2.7.7.6</ecNumber>
    </recommendedName>
    <alternativeName>
        <fullName evidence="1">RNA polymerase subunit beta</fullName>
    </alternativeName>
    <alternativeName>
        <fullName evidence="1">Transcriptase subunit beta</fullName>
    </alternativeName>
</protein>
<sequence>MPPLIESVVLQPLIAPIDPGFDGRRSRRIERRSFARIKDAIDLPLLIETQLKSFEWFKREGLRELFDEISPITDFTGKNLELHFREYTFGEPRYDEFECRDRDLTYAAPLRVKVELRILTTGEIKESEIFLGDFPMMTDNGTFVYNGAERVVVSQLIRSPGVYFKDEKDPTSGRALHTAKLIPNRGAWLEFETNKRDVISVKVDRKRKIPVTILLRAISAWIANEDGSGRWAPDNELDKYGHNEHLIELFRHVDTVAEHLYIQATIDKDPSHNAKEALLELYKRLRPGDPPTLENARTLIESLLFNPRRYDLAKVGRYKLNKNLWERDARRDGPKAPDLSVRVLLPRDIFRIVEQMILLNNGYGRPDDIDHLGNRRVRTVGELIQQQFRVGLLRLERVVKERMSLQDPASATPNGLINIRPVVAAMREFFGGSQLSQFMDQTNPLAELTNKRRLSALGPGGLSRDRAGFEVRDVHHSHYGRICPVETPEGPNIGLIGTMSTFARVNEMGFLETPYRKVYNSIDNAQVWREKGILLRDVRDLRTGDLIAAKGTRVDDQIARQITIGLLRGQILREDVVDPNTGELIAEAGTEINRALAERIVNLPMKQIKIRPVVSQEVDYLSADEEDRFVIVQANAPLDEHNRFLDTTVSCRFGEDFVTERVERVDYMDVSPKQVVSVSTSLIPFLEHDDANRALMGSNMQRQAVPLLRPDAPIVGTGMEYRTARDSGQVVVARRDGVVVSATGNRIIVEEDDGKRTEYRLRKFMRSNQDTCINQRPSVVRGQQVRAGDVIADSSSTDQGELALGQNVLVAYMPWEGGNFEDAILVSERLVREDIFTSIHIEKYEVEARDTKLGPEEITRDIPNVGQDSLRNLDERGIIYIGAEVQPNDILVGKITPKGETDLTAEERLLRAIFGEKAREVKDSSLRVPNGVRGKVIDVKVFSRSEGAELPVGVNQTVRVLLCQKRKISAGDKMAGRHGNKGVVSRVLPMEDMPFLPDGRPVDIILNPIGVPSRMNIGQILETHLGWAAARLGFRVATPVFDGAHEDQIKDLLVQAGLPADGKVTLYDGRTGEKFDHPVTVGYAYMLKLAHLVEDKIHARSTGPYSLVTQQPLGGKAQFGGQRFGEMEVWALEAYGAAYTLQEMLTVKSDDVVGRVKTYEAIVKGEPIQEAGVPESFKVLIKELQSLGLSVEVLSADEKPVELSDDLDSDIGALEGINLSGMERGEF</sequence>
<reference key="1">
    <citation type="submission" date="2008-12" db="EMBL/GenBank/DDBJ databases">
        <title>Complete sequence of Chloroflexus aggregans DSM 9485.</title>
        <authorList>
            <consortium name="US DOE Joint Genome Institute"/>
            <person name="Lucas S."/>
            <person name="Copeland A."/>
            <person name="Lapidus A."/>
            <person name="Glavina del Rio T."/>
            <person name="Dalin E."/>
            <person name="Tice H."/>
            <person name="Pitluck S."/>
            <person name="Foster B."/>
            <person name="Larimer F."/>
            <person name="Land M."/>
            <person name="Hauser L."/>
            <person name="Kyrpides N."/>
            <person name="Mikhailova N."/>
            <person name="Bryant D.A."/>
            <person name="Richardson P."/>
        </authorList>
    </citation>
    <scope>NUCLEOTIDE SEQUENCE [LARGE SCALE GENOMIC DNA]</scope>
    <source>
        <strain>MD-66 / DSM 9485</strain>
    </source>
</reference>
<organism>
    <name type="scientific">Chloroflexus aggregans (strain MD-66 / DSM 9485)</name>
    <dbReference type="NCBI Taxonomy" id="326427"/>
    <lineage>
        <taxon>Bacteria</taxon>
        <taxon>Bacillati</taxon>
        <taxon>Chloroflexota</taxon>
        <taxon>Chloroflexia</taxon>
        <taxon>Chloroflexales</taxon>
        <taxon>Chloroflexineae</taxon>
        <taxon>Chloroflexaceae</taxon>
        <taxon>Chloroflexus</taxon>
    </lineage>
</organism>
<keyword id="KW-0240">DNA-directed RNA polymerase</keyword>
<keyword id="KW-0548">Nucleotidyltransferase</keyword>
<keyword id="KW-0804">Transcription</keyword>
<keyword id="KW-0808">Transferase</keyword>
<comment type="function">
    <text evidence="1">DNA-dependent RNA polymerase catalyzes the transcription of DNA into RNA using the four ribonucleoside triphosphates as substrates.</text>
</comment>
<comment type="catalytic activity">
    <reaction evidence="1">
        <text>RNA(n) + a ribonucleoside 5'-triphosphate = RNA(n+1) + diphosphate</text>
        <dbReference type="Rhea" id="RHEA:21248"/>
        <dbReference type="Rhea" id="RHEA-COMP:14527"/>
        <dbReference type="Rhea" id="RHEA-COMP:17342"/>
        <dbReference type="ChEBI" id="CHEBI:33019"/>
        <dbReference type="ChEBI" id="CHEBI:61557"/>
        <dbReference type="ChEBI" id="CHEBI:140395"/>
        <dbReference type="EC" id="2.7.7.6"/>
    </reaction>
</comment>
<comment type="subunit">
    <text evidence="1">The RNAP catalytic core consists of 2 alpha, 1 beta, 1 beta' and 1 omega subunit. When a sigma factor is associated with the core the holoenzyme is formed, which can initiate transcription.</text>
</comment>
<comment type="similarity">
    <text evidence="1">Belongs to the RNA polymerase beta chain family.</text>
</comment>